<organism>
    <name type="scientific">Haemophilus influenzae (strain ATCC 51907 / DSM 11121 / KW20 / Rd)</name>
    <dbReference type="NCBI Taxonomy" id="71421"/>
    <lineage>
        <taxon>Bacteria</taxon>
        <taxon>Pseudomonadati</taxon>
        <taxon>Pseudomonadota</taxon>
        <taxon>Gammaproteobacteria</taxon>
        <taxon>Pasteurellales</taxon>
        <taxon>Pasteurellaceae</taxon>
        <taxon>Haemophilus</taxon>
    </lineage>
</organism>
<evidence type="ECO:0000250" key="1">
    <source>
        <dbReference type="UniProtKB" id="P0AC23"/>
    </source>
</evidence>
<evidence type="ECO:0000250" key="2">
    <source>
        <dbReference type="UniProtKB" id="P0AC25"/>
    </source>
</evidence>
<evidence type="ECO:0000255" key="3"/>
<evidence type="ECO:0000305" key="4"/>
<name>FOCA_HAEIN</name>
<dbReference type="EMBL" id="L42023">
    <property type="protein sequence ID" value="AAC21850.1"/>
    <property type="molecule type" value="Genomic_DNA"/>
</dbReference>
<dbReference type="PIR" id="G64052">
    <property type="entry name" value="G64052"/>
</dbReference>
<dbReference type="RefSeq" id="NP_438349.1">
    <property type="nucleotide sequence ID" value="NC_000907.1"/>
</dbReference>
<dbReference type="SMR" id="P43756"/>
<dbReference type="STRING" id="71421.HI_0181"/>
<dbReference type="EnsemblBacteria" id="AAC21850">
    <property type="protein sequence ID" value="AAC21850"/>
    <property type="gene ID" value="HI_0181"/>
</dbReference>
<dbReference type="KEGG" id="hin:HI_0181"/>
<dbReference type="PATRIC" id="fig|71421.8.peg.185"/>
<dbReference type="eggNOG" id="COG2116">
    <property type="taxonomic scope" value="Bacteria"/>
</dbReference>
<dbReference type="HOGENOM" id="CLU_036896_3_0_6"/>
<dbReference type="OrthoDB" id="9786493at2"/>
<dbReference type="PhylomeDB" id="P43756"/>
<dbReference type="BioCyc" id="HINF71421:G1GJ1-191-MONOMER"/>
<dbReference type="Proteomes" id="UP000000579">
    <property type="component" value="Chromosome"/>
</dbReference>
<dbReference type="GO" id="GO:0005886">
    <property type="term" value="C:plasma membrane"/>
    <property type="evidence" value="ECO:0000318"/>
    <property type="project" value="GO_Central"/>
</dbReference>
<dbReference type="GO" id="GO:0015499">
    <property type="term" value="F:formate transmembrane transporter activity"/>
    <property type="evidence" value="ECO:0000318"/>
    <property type="project" value="GO_Central"/>
</dbReference>
<dbReference type="GO" id="GO:0015724">
    <property type="term" value="P:formate transport"/>
    <property type="evidence" value="ECO:0000318"/>
    <property type="project" value="GO_Central"/>
</dbReference>
<dbReference type="FunFam" id="1.20.1080.10:FF:000006">
    <property type="entry name" value="Formate transporter FocA"/>
    <property type="match status" value="1"/>
</dbReference>
<dbReference type="Gene3D" id="1.20.1080.10">
    <property type="entry name" value="Glycerol uptake facilitator protein"/>
    <property type="match status" value="1"/>
</dbReference>
<dbReference type="InterPro" id="IPR023271">
    <property type="entry name" value="Aquaporin-like"/>
</dbReference>
<dbReference type="InterPro" id="IPR000292">
    <property type="entry name" value="For/NO2_transpt"/>
</dbReference>
<dbReference type="InterPro" id="IPR024002">
    <property type="entry name" value="For/NO2_transpt_CS"/>
</dbReference>
<dbReference type="InterPro" id="IPR023999">
    <property type="entry name" value="Formate_transptr_FocA"/>
</dbReference>
<dbReference type="NCBIfam" id="TIGR00790">
    <property type="entry name" value="fnt"/>
    <property type="match status" value="1"/>
</dbReference>
<dbReference type="NCBIfam" id="TIGR04060">
    <property type="entry name" value="formate_focA"/>
    <property type="match status" value="1"/>
</dbReference>
<dbReference type="PANTHER" id="PTHR30520:SF10">
    <property type="entry name" value="FORMATE CHANNEL FOCA-RELATED"/>
    <property type="match status" value="1"/>
</dbReference>
<dbReference type="PANTHER" id="PTHR30520">
    <property type="entry name" value="FORMATE TRANSPORTER-RELATED"/>
    <property type="match status" value="1"/>
</dbReference>
<dbReference type="Pfam" id="PF01226">
    <property type="entry name" value="Form_Nir_trans"/>
    <property type="match status" value="1"/>
</dbReference>
<dbReference type="PROSITE" id="PS01005">
    <property type="entry name" value="FORMATE_NITRITE_TP_1"/>
    <property type="match status" value="1"/>
</dbReference>
<dbReference type="PROSITE" id="PS01006">
    <property type="entry name" value="FORMATE_NITRITE_TP_2"/>
    <property type="match status" value="1"/>
</dbReference>
<comment type="function">
    <text evidence="1">Involved in the bidirectional transport of formate during mixed-acid fermentation. Functions to maintain relatively constant intracellular formate levels during growth, using different mechanisms for efflux and uptake of the anion.</text>
</comment>
<comment type="catalytic activity">
    <reaction evidence="1">
        <text>formate(in) = formate(out)</text>
        <dbReference type="Rhea" id="RHEA:29679"/>
        <dbReference type="ChEBI" id="CHEBI:15740"/>
    </reaction>
</comment>
<comment type="subunit">
    <text evidence="2">Homopentamer.</text>
</comment>
<comment type="subcellular location">
    <subcellularLocation>
        <location evidence="2">Cell inner membrane</location>
        <topology evidence="2">Multi-pass membrane protein</topology>
    </subcellularLocation>
</comment>
<comment type="similarity">
    <text evidence="4">Belongs to the FNT transporter (TC 1.A.16) family.</text>
</comment>
<protein>
    <recommendedName>
        <fullName evidence="1">Formate channel FocA</fullName>
    </recommendedName>
    <alternativeName>
        <fullName evidence="1">Formate transporter FocA</fullName>
    </alternativeName>
</protein>
<feature type="chain" id="PRO_0000094720" description="Formate channel FocA">
    <location>
        <begin position="1"/>
        <end position="284"/>
    </location>
</feature>
<feature type="topological domain" description="Cytoplasmic" evidence="4">
    <location>
        <begin position="1"/>
        <end position="34"/>
    </location>
</feature>
<feature type="transmembrane region" description="Helical" evidence="3">
    <location>
        <begin position="35"/>
        <end position="55"/>
    </location>
</feature>
<feature type="topological domain" description="Periplasmic" evidence="4">
    <location>
        <begin position="56"/>
        <end position="72"/>
    </location>
</feature>
<feature type="transmembrane region" description="Helical" evidence="3">
    <location>
        <begin position="73"/>
        <end position="93"/>
    </location>
</feature>
<feature type="topological domain" description="Cytoplasmic" evidence="4">
    <location>
        <begin position="94"/>
        <end position="116"/>
    </location>
</feature>
<feature type="transmembrane region" description="Helical" evidence="3">
    <location>
        <begin position="117"/>
        <end position="137"/>
    </location>
</feature>
<feature type="topological domain" description="Periplasmic" evidence="4">
    <location>
        <begin position="138"/>
        <end position="163"/>
    </location>
</feature>
<feature type="transmembrane region" description="Helical" evidence="3">
    <location>
        <begin position="164"/>
        <end position="184"/>
    </location>
</feature>
<feature type="topological domain" description="Cytoplasmic" evidence="4">
    <location>
        <begin position="185"/>
        <end position="194"/>
    </location>
</feature>
<feature type="transmembrane region" description="Helical" evidence="3">
    <location>
        <begin position="195"/>
        <end position="215"/>
    </location>
</feature>
<feature type="topological domain" description="Periplasmic" evidence="4">
    <location>
        <begin position="216"/>
        <end position="252"/>
    </location>
</feature>
<feature type="transmembrane region" description="Helical" evidence="3">
    <location>
        <begin position="253"/>
        <end position="273"/>
    </location>
</feature>
<feature type="topological domain" description="Cytoplasmic" evidence="4">
    <location>
        <begin position="274"/>
        <end position="284"/>
    </location>
</feature>
<feature type="site" description="Important for formate translocation" evidence="1">
    <location>
        <position position="94"/>
    </location>
</feature>
<feature type="site" description="Important for formate translocation" evidence="1">
    <location>
        <position position="212"/>
    </location>
</feature>
<reference key="1">
    <citation type="journal article" date="1995" name="Science">
        <title>Whole-genome random sequencing and assembly of Haemophilus influenzae Rd.</title>
        <authorList>
            <person name="Fleischmann R.D."/>
            <person name="Adams M.D."/>
            <person name="White O."/>
            <person name="Clayton R.A."/>
            <person name="Kirkness E.F."/>
            <person name="Kerlavage A.R."/>
            <person name="Bult C.J."/>
            <person name="Tomb J.-F."/>
            <person name="Dougherty B.A."/>
            <person name="Merrick J.M."/>
            <person name="McKenney K."/>
            <person name="Sutton G.G."/>
            <person name="FitzHugh W."/>
            <person name="Fields C.A."/>
            <person name="Gocayne J.D."/>
            <person name="Scott J.D."/>
            <person name="Shirley R."/>
            <person name="Liu L.-I."/>
            <person name="Glodek A."/>
            <person name="Kelley J.M."/>
            <person name="Weidman J.F."/>
            <person name="Phillips C.A."/>
            <person name="Spriggs T."/>
            <person name="Hedblom E."/>
            <person name="Cotton M.D."/>
            <person name="Utterback T.R."/>
            <person name="Hanna M.C."/>
            <person name="Nguyen D.T."/>
            <person name="Saudek D.M."/>
            <person name="Brandon R.C."/>
            <person name="Fine L.D."/>
            <person name="Fritchman J.L."/>
            <person name="Fuhrmann J.L."/>
            <person name="Geoghagen N.S.M."/>
            <person name="Gnehm C.L."/>
            <person name="McDonald L.A."/>
            <person name="Small K.V."/>
            <person name="Fraser C.M."/>
            <person name="Smith H.O."/>
            <person name="Venter J.C."/>
        </authorList>
    </citation>
    <scope>NUCLEOTIDE SEQUENCE [LARGE SCALE GENOMIC DNA]</scope>
    <source>
        <strain>ATCC 51907 / DSM 11121 / KW20 / Rd</strain>
    </source>
</reference>
<keyword id="KW-0997">Cell inner membrane</keyword>
<keyword id="KW-1003">Cell membrane</keyword>
<keyword id="KW-0472">Membrane</keyword>
<keyword id="KW-1185">Reference proteome</keyword>
<keyword id="KW-0812">Transmembrane</keyword>
<keyword id="KW-1133">Transmembrane helix</keyword>
<keyword id="KW-0813">Transport</keyword>
<sequence>MASENQKLSSVALTPVEATDYAENTATYKANKRPFLSFMSGISAGACIALAFVFYTTTQTASAGAPWGLTKLVGGLVFSLGVIMVVILGSELFTSSTLTLVARVGGRITTTQMIRNWIVVYLGNFVGGLFIAAVIWFSGQTMAANGQWGLTILATAQHKIHHTWFEAFNLGILCNIMVCVAVWMSYSGKTVTDKAFIMIMPIGLFVASGFEHCVANMFMIPMGIITAHFSTPEFWQQIGVDPMKYADLDLYHFIVKNLIPVTLGNIVGGAICIGVFQRYLTKTH</sequence>
<accession>P43756</accession>
<proteinExistence type="inferred from homology"/>
<gene>
    <name type="primary">focA</name>
    <name type="ordered locus">HI_0181</name>
</gene>